<protein>
    <recommendedName>
        <fullName evidence="1">Fibrillarin-like rRNA/tRNA 2'-O-methyltransferase</fullName>
        <ecNumber evidence="1">2.1.1.-</ecNumber>
    </recommendedName>
</protein>
<feature type="chain" id="PRO_0000389600" description="Fibrillarin-like rRNA/tRNA 2'-O-methyltransferase">
    <location>
        <begin position="1"/>
        <end position="212"/>
    </location>
</feature>
<feature type="region of interest" description="Disordered" evidence="2">
    <location>
        <begin position="1"/>
        <end position="37"/>
    </location>
</feature>
<feature type="binding site" evidence="1">
    <location>
        <begin position="74"/>
        <end position="75"/>
    </location>
    <ligand>
        <name>S-adenosyl-L-methionine</name>
        <dbReference type="ChEBI" id="CHEBI:59789"/>
    </ligand>
</feature>
<feature type="binding site" evidence="1">
    <location>
        <begin position="90"/>
        <end position="91"/>
    </location>
    <ligand>
        <name>S-adenosyl-L-methionine</name>
        <dbReference type="ChEBI" id="CHEBI:59789"/>
    </ligand>
</feature>
<feature type="binding site" evidence="1">
    <location>
        <begin position="115"/>
        <end position="116"/>
    </location>
    <ligand>
        <name>S-adenosyl-L-methionine</name>
        <dbReference type="ChEBI" id="CHEBI:59789"/>
    </ligand>
</feature>
<feature type="binding site" evidence="1">
    <location>
        <begin position="136"/>
        <end position="139"/>
    </location>
    <ligand>
        <name>S-adenosyl-L-methionine</name>
        <dbReference type="ChEBI" id="CHEBI:59789"/>
    </ligand>
</feature>
<organism>
    <name type="scientific">Halorubrum lacusprofundi (strain ATCC 49239 / DSM 5036 / JCM 8891 / ACAM 34)</name>
    <dbReference type="NCBI Taxonomy" id="416348"/>
    <lineage>
        <taxon>Archaea</taxon>
        <taxon>Methanobacteriati</taxon>
        <taxon>Methanobacteriota</taxon>
        <taxon>Stenosarchaea group</taxon>
        <taxon>Halobacteria</taxon>
        <taxon>Halobacteriales</taxon>
        <taxon>Haloferacaceae</taxon>
        <taxon>Halorubrum</taxon>
    </lineage>
</organism>
<name>FLPA_HALLT</name>
<sequence length="212" mass="23169">MSEPNLPAGVERREIGGETRLATRGPPVYGEPTADGWRAWDPGRSKLGGMFELGFETGLSGGETVLYLGAASGTTVSHVADFAGPTYAVEFAPRPARDLVEAAEPRDRLFPLLKDARTPKRYAHVVESDVDAIVQDVATRGQAEVAVRNARFLADDGRLLLAIKARSEDVTVEPETVFEGALDRLRETYEILETQRLDRFHEDHLGVVATPK</sequence>
<proteinExistence type="inferred from homology"/>
<keyword id="KW-0489">Methyltransferase</keyword>
<keyword id="KW-1185">Reference proteome</keyword>
<keyword id="KW-0694">RNA-binding</keyword>
<keyword id="KW-0698">rRNA processing</keyword>
<keyword id="KW-0808">Transferase</keyword>
<keyword id="KW-0819">tRNA processing</keyword>
<evidence type="ECO:0000255" key="1">
    <source>
        <dbReference type="HAMAP-Rule" id="MF_00351"/>
    </source>
</evidence>
<evidence type="ECO:0000256" key="2">
    <source>
        <dbReference type="SAM" id="MobiDB-lite"/>
    </source>
</evidence>
<gene>
    <name evidence="1" type="primary">flpA</name>
    <name type="ordered locus">Hlac_1042</name>
</gene>
<accession>B9LMQ1</accession>
<comment type="function">
    <text evidence="1">Involved in pre-rRNA and tRNA processing. Utilizes the methyl donor S-adenosyl-L-methionine to catalyze the site-specific 2'-hydroxyl methylation of ribose moieties in rRNA and tRNA. Site specificity is provided by a guide RNA that base pairs with the substrate. Methylation occurs at a characteristic distance from the sequence involved in base pairing with the guide RNA.</text>
</comment>
<comment type="subunit">
    <text evidence="1">Interacts with nop5. Component of box C/D small ribonucleoprotein (sRNP) particles that contain rpl7ae, FlpA and nop5, plus a guide RNA.</text>
</comment>
<comment type="similarity">
    <text evidence="1">Belongs to the methyltransferase superfamily. Fibrillarin family.</text>
</comment>
<dbReference type="EC" id="2.1.1.-" evidence="1"/>
<dbReference type="EMBL" id="CP001365">
    <property type="protein sequence ID" value="ACM56639.1"/>
    <property type="molecule type" value="Genomic_DNA"/>
</dbReference>
<dbReference type="RefSeq" id="WP_015909786.1">
    <property type="nucleotide sequence ID" value="NC_012029.1"/>
</dbReference>
<dbReference type="SMR" id="B9LMQ1"/>
<dbReference type="GeneID" id="7400113"/>
<dbReference type="KEGG" id="hla:Hlac_1042"/>
<dbReference type="eggNOG" id="arCOG00078">
    <property type="taxonomic scope" value="Archaea"/>
</dbReference>
<dbReference type="HOGENOM" id="CLU_059055_2_0_2"/>
<dbReference type="Proteomes" id="UP000000740">
    <property type="component" value="Chromosome 1"/>
</dbReference>
<dbReference type="GO" id="GO:1990259">
    <property type="term" value="F:histone H2AQ104 methyltransferase activity"/>
    <property type="evidence" value="ECO:0007669"/>
    <property type="project" value="TreeGrafter"/>
</dbReference>
<dbReference type="GO" id="GO:0003723">
    <property type="term" value="F:RNA binding"/>
    <property type="evidence" value="ECO:0007669"/>
    <property type="project" value="UniProtKB-UniRule"/>
</dbReference>
<dbReference type="GO" id="GO:0008649">
    <property type="term" value="F:rRNA methyltransferase activity"/>
    <property type="evidence" value="ECO:0007669"/>
    <property type="project" value="TreeGrafter"/>
</dbReference>
<dbReference type="GO" id="GO:0000494">
    <property type="term" value="P:box C/D sno(s)RNA 3'-end processing"/>
    <property type="evidence" value="ECO:0007669"/>
    <property type="project" value="TreeGrafter"/>
</dbReference>
<dbReference type="GO" id="GO:0008033">
    <property type="term" value="P:tRNA processing"/>
    <property type="evidence" value="ECO:0007669"/>
    <property type="project" value="UniProtKB-UniRule"/>
</dbReference>
<dbReference type="Gene3D" id="3.40.50.150">
    <property type="entry name" value="Vaccinia Virus protein VP39"/>
    <property type="match status" value="1"/>
</dbReference>
<dbReference type="HAMAP" id="MF_00351">
    <property type="entry name" value="RNA_methyltransf_FlpA"/>
    <property type="match status" value="1"/>
</dbReference>
<dbReference type="InterPro" id="IPR000692">
    <property type="entry name" value="Fibrillarin"/>
</dbReference>
<dbReference type="InterPro" id="IPR020813">
    <property type="entry name" value="Fibrillarin_CS"/>
</dbReference>
<dbReference type="InterPro" id="IPR029063">
    <property type="entry name" value="SAM-dependent_MTases_sf"/>
</dbReference>
<dbReference type="NCBIfam" id="NF003276">
    <property type="entry name" value="PRK04266.1-2"/>
    <property type="match status" value="1"/>
</dbReference>
<dbReference type="NCBIfam" id="NF003278">
    <property type="entry name" value="PRK04266.1-4"/>
    <property type="match status" value="1"/>
</dbReference>
<dbReference type="PANTHER" id="PTHR10335:SF17">
    <property type="entry name" value="FIBRILLARIN"/>
    <property type="match status" value="1"/>
</dbReference>
<dbReference type="PANTHER" id="PTHR10335">
    <property type="entry name" value="RRNA 2-O-METHYLTRANSFERASE FIBRILLARIN"/>
    <property type="match status" value="1"/>
</dbReference>
<dbReference type="Pfam" id="PF01269">
    <property type="entry name" value="Fibrillarin"/>
    <property type="match status" value="1"/>
</dbReference>
<dbReference type="PRINTS" id="PR00052">
    <property type="entry name" value="FIBRILLARIN"/>
</dbReference>
<dbReference type="SMART" id="SM01206">
    <property type="entry name" value="Fibrillarin"/>
    <property type="match status" value="1"/>
</dbReference>
<dbReference type="SUPFAM" id="SSF53335">
    <property type="entry name" value="S-adenosyl-L-methionine-dependent methyltransferases"/>
    <property type="match status" value="1"/>
</dbReference>
<dbReference type="PROSITE" id="PS00566">
    <property type="entry name" value="FIBRILLARIN"/>
    <property type="match status" value="1"/>
</dbReference>
<reference key="1">
    <citation type="journal article" date="2016" name="Stand. Genomic Sci.">
        <title>Complete genome sequence of the Antarctic Halorubrum lacusprofundi type strain ACAM 34.</title>
        <authorList>
            <person name="Anderson I.J."/>
            <person name="DasSarma P."/>
            <person name="Lucas S."/>
            <person name="Copeland A."/>
            <person name="Lapidus A."/>
            <person name="Del Rio T.G."/>
            <person name="Tice H."/>
            <person name="Dalin E."/>
            <person name="Bruce D.C."/>
            <person name="Goodwin L."/>
            <person name="Pitluck S."/>
            <person name="Sims D."/>
            <person name="Brettin T.S."/>
            <person name="Detter J.C."/>
            <person name="Han C.S."/>
            <person name="Larimer F."/>
            <person name="Hauser L."/>
            <person name="Land M."/>
            <person name="Ivanova N."/>
            <person name="Richardson P."/>
            <person name="Cavicchioli R."/>
            <person name="DasSarma S."/>
            <person name="Woese C.R."/>
            <person name="Kyrpides N.C."/>
        </authorList>
    </citation>
    <scope>NUCLEOTIDE SEQUENCE [LARGE SCALE GENOMIC DNA]</scope>
    <source>
        <strain>ATCC 49239 / DSM 5036 / JCM 8891 / ACAM 34</strain>
    </source>
</reference>